<accession>Q92N62</accession>
<organism>
    <name type="scientific">Rhizobium meliloti (strain 1021)</name>
    <name type="common">Ensifer meliloti</name>
    <name type="synonym">Sinorhizobium meliloti</name>
    <dbReference type="NCBI Taxonomy" id="266834"/>
    <lineage>
        <taxon>Bacteria</taxon>
        <taxon>Pseudomonadati</taxon>
        <taxon>Pseudomonadota</taxon>
        <taxon>Alphaproteobacteria</taxon>
        <taxon>Hyphomicrobiales</taxon>
        <taxon>Rhizobiaceae</taxon>
        <taxon>Sinorhizobium/Ensifer group</taxon>
        <taxon>Sinorhizobium</taxon>
    </lineage>
</organism>
<protein>
    <recommendedName>
        <fullName evidence="1">Adenine phosphoribosyltransferase</fullName>
        <shortName evidence="1">APRT</shortName>
        <ecNumber evidence="1">2.4.2.7</ecNumber>
    </recommendedName>
</protein>
<dbReference type="EC" id="2.4.2.7" evidence="1"/>
<dbReference type="EMBL" id="AL591688">
    <property type="protein sequence ID" value="CAC46939.1"/>
    <property type="molecule type" value="Genomic_DNA"/>
</dbReference>
<dbReference type="RefSeq" id="NP_386466.1">
    <property type="nucleotide sequence ID" value="NC_003047.1"/>
</dbReference>
<dbReference type="RefSeq" id="WP_003534501.1">
    <property type="nucleotide sequence ID" value="NC_003047.1"/>
</dbReference>
<dbReference type="SMR" id="Q92N62"/>
<dbReference type="EnsemblBacteria" id="CAC46939">
    <property type="protein sequence ID" value="CAC46939"/>
    <property type="gene ID" value="SMc02698"/>
</dbReference>
<dbReference type="KEGG" id="sme:SMc02698"/>
<dbReference type="PATRIC" id="fig|266834.11.peg.3843"/>
<dbReference type="eggNOG" id="COG0503">
    <property type="taxonomic scope" value="Bacteria"/>
</dbReference>
<dbReference type="HOGENOM" id="CLU_063339_3_0_5"/>
<dbReference type="OrthoDB" id="9803963at2"/>
<dbReference type="BioCyc" id="MetaCyc:MONOMER-19925"/>
<dbReference type="UniPathway" id="UPA00588">
    <property type="reaction ID" value="UER00646"/>
</dbReference>
<dbReference type="Proteomes" id="UP000001976">
    <property type="component" value="Chromosome"/>
</dbReference>
<dbReference type="GO" id="GO:0005737">
    <property type="term" value="C:cytoplasm"/>
    <property type="evidence" value="ECO:0007669"/>
    <property type="project" value="UniProtKB-SubCell"/>
</dbReference>
<dbReference type="GO" id="GO:0002055">
    <property type="term" value="F:adenine binding"/>
    <property type="evidence" value="ECO:0007669"/>
    <property type="project" value="TreeGrafter"/>
</dbReference>
<dbReference type="GO" id="GO:0003999">
    <property type="term" value="F:adenine phosphoribosyltransferase activity"/>
    <property type="evidence" value="ECO:0007669"/>
    <property type="project" value="UniProtKB-UniRule"/>
</dbReference>
<dbReference type="GO" id="GO:0016208">
    <property type="term" value="F:AMP binding"/>
    <property type="evidence" value="ECO:0007669"/>
    <property type="project" value="TreeGrafter"/>
</dbReference>
<dbReference type="GO" id="GO:0006168">
    <property type="term" value="P:adenine salvage"/>
    <property type="evidence" value="ECO:0007669"/>
    <property type="project" value="InterPro"/>
</dbReference>
<dbReference type="GO" id="GO:0044209">
    <property type="term" value="P:AMP salvage"/>
    <property type="evidence" value="ECO:0007669"/>
    <property type="project" value="UniProtKB-UniRule"/>
</dbReference>
<dbReference type="GO" id="GO:0006166">
    <property type="term" value="P:purine ribonucleoside salvage"/>
    <property type="evidence" value="ECO:0007669"/>
    <property type="project" value="UniProtKB-KW"/>
</dbReference>
<dbReference type="CDD" id="cd06223">
    <property type="entry name" value="PRTases_typeI"/>
    <property type="match status" value="1"/>
</dbReference>
<dbReference type="FunFam" id="3.40.50.2020:FF:000021">
    <property type="entry name" value="Adenine phosphoribosyltransferase"/>
    <property type="match status" value="1"/>
</dbReference>
<dbReference type="Gene3D" id="3.40.50.2020">
    <property type="match status" value="1"/>
</dbReference>
<dbReference type="HAMAP" id="MF_00004">
    <property type="entry name" value="Aden_phosphoribosyltr"/>
    <property type="match status" value="1"/>
</dbReference>
<dbReference type="InterPro" id="IPR005764">
    <property type="entry name" value="Ade_phspho_trans"/>
</dbReference>
<dbReference type="InterPro" id="IPR000836">
    <property type="entry name" value="PRibTrfase_dom"/>
</dbReference>
<dbReference type="InterPro" id="IPR029057">
    <property type="entry name" value="PRTase-like"/>
</dbReference>
<dbReference type="InterPro" id="IPR050054">
    <property type="entry name" value="UPRTase/APRTase"/>
</dbReference>
<dbReference type="NCBIfam" id="TIGR01090">
    <property type="entry name" value="apt"/>
    <property type="match status" value="1"/>
</dbReference>
<dbReference type="NCBIfam" id="NF002634">
    <property type="entry name" value="PRK02304.1-3"/>
    <property type="match status" value="1"/>
</dbReference>
<dbReference type="NCBIfam" id="NF002636">
    <property type="entry name" value="PRK02304.1-5"/>
    <property type="match status" value="1"/>
</dbReference>
<dbReference type="PANTHER" id="PTHR32315">
    <property type="entry name" value="ADENINE PHOSPHORIBOSYLTRANSFERASE"/>
    <property type="match status" value="1"/>
</dbReference>
<dbReference type="PANTHER" id="PTHR32315:SF3">
    <property type="entry name" value="ADENINE PHOSPHORIBOSYLTRANSFERASE"/>
    <property type="match status" value="1"/>
</dbReference>
<dbReference type="Pfam" id="PF00156">
    <property type="entry name" value="Pribosyltran"/>
    <property type="match status" value="1"/>
</dbReference>
<dbReference type="SUPFAM" id="SSF53271">
    <property type="entry name" value="PRTase-like"/>
    <property type="match status" value="1"/>
</dbReference>
<dbReference type="PROSITE" id="PS00103">
    <property type="entry name" value="PUR_PYR_PR_TRANSFER"/>
    <property type="match status" value="1"/>
</dbReference>
<proteinExistence type="inferred from homology"/>
<sequence length="180" mass="19372">MTAVQSELISAIRSIPDYPKPGVMFRDITTLLGNPRAFRRAIDELVHPYAGTKVDKVAGIEARGFILGGAIAHQLSAGFIPIRKKGKLPHDTVRIAYSLEYGVDEMEMHRDAVAPGDKVILVDDLIATGGTAEGAAKLLKQMGADIVAACFIIDLPELGGRKKLEALGVNVRTLIEFEGH</sequence>
<keyword id="KW-0963">Cytoplasm</keyword>
<keyword id="KW-0328">Glycosyltransferase</keyword>
<keyword id="KW-0660">Purine salvage</keyword>
<keyword id="KW-1185">Reference proteome</keyword>
<keyword id="KW-0808">Transferase</keyword>
<comment type="function">
    <text evidence="1">Catalyzes a salvage reaction resulting in the formation of AMP, that is energically less costly than de novo synthesis.</text>
</comment>
<comment type="catalytic activity">
    <reaction evidence="1">
        <text>AMP + diphosphate = 5-phospho-alpha-D-ribose 1-diphosphate + adenine</text>
        <dbReference type="Rhea" id="RHEA:16609"/>
        <dbReference type="ChEBI" id="CHEBI:16708"/>
        <dbReference type="ChEBI" id="CHEBI:33019"/>
        <dbReference type="ChEBI" id="CHEBI:58017"/>
        <dbReference type="ChEBI" id="CHEBI:456215"/>
        <dbReference type="EC" id="2.4.2.7"/>
    </reaction>
</comment>
<comment type="pathway">
    <text evidence="1">Purine metabolism; AMP biosynthesis via salvage pathway; AMP from adenine: step 1/1.</text>
</comment>
<comment type="subunit">
    <text evidence="1">Homodimer.</text>
</comment>
<comment type="subcellular location">
    <subcellularLocation>
        <location evidence="1">Cytoplasm</location>
    </subcellularLocation>
</comment>
<comment type="similarity">
    <text evidence="1">Belongs to the purine/pyrimidine phosphoribosyltransferase family.</text>
</comment>
<name>APT_RHIME</name>
<reference key="1">
    <citation type="journal article" date="2001" name="Proc. Natl. Acad. Sci. U.S.A.">
        <title>Analysis of the chromosome sequence of the legume symbiont Sinorhizobium meliloti strain 1021.</title>
        <authorList>
            <person name="Capela D."/>
            <person name="Barloy-Hubler F."/>
            <person name="Gouzy J."/>
            <person name="Bothe G."/>
            <person name="Ampe F."/>
            <person name="Batut J."/>
            <person name="Boistard P."/>
            <person name="Becker A."/>
            <person name="Boutry M."/>
            <person name="Cadieu E."/>
            <person name="Dreano S."/>
            <person name="Gloux S."/>
            <person name="Godrie T."/>
            <person name="Goffeau A."/>
            <person name="Kahn D."/>
            <person name="Kiss E."/>
            <person name="Lelaure V."/>
            <person name="Masuy D."/>
            <person name="Pohl T."/>
            <person name="Portetelle D."/>
            <person name="Puehler A."/>
            <person name="Purnelle B."/>
            <person name="Ramsperger U."/>
            <person name="Renard C."/>
            <person name="Thebault P."/>
            <person name="Vandenbol M."/>
            <person name="Weidner S."/>
            <person name="Galibert F."/>
        </authorList>
    </citation>
    <scope>NUCLEOTIDE SEQUENCE [LARGE SCALE GENOMIC DNA]</scope>
    <source>
        <strain>1021</strain>
    </source>
</reference>
<reference key="2">
    <citation type="journal article" date="2001" name="Science">
        <title>The composite genome of the legume symbiont Sinorhizobium meliloti.</title>
        <authorList>
            <person name="Galibert F."/>
            <person name="Finan T.M."/>
            <person name="Long S.R."/>
            <person name="Puehler A."/>
            <person name="Abola P."/>
            <person name="Ampe F."/>
            <person name="Barloy-Hubler F."/>
            <person name="Barnett M.J."/>
            <person name="Becker A."/>
            <person name="Boistard P."/>
            <person name="Bothe G."/>
            <person name="Boutry M."/>
            <person name="Bowser L."/>
            <person name="Buhrmester J."/>
            <person name="Cadieu E."/>
            <person name="Capela D."/>
            <person name="Chain P."/>
            <person name="Cowie A."/>
            <person name="Davis R.W."/>
            <person name="Dreano S."/>
            <person name="Federspiel N.A."/>
            <person name="Fisher R.F."/>
            <person name="Gloux S."/>
            <person name="Godrie T."/>
            <person name="Goffeau A."/>
            <person name="Golding B."/>
            <person name="Gouzy J."/>
            <person name="Gurjal M."/>
            <person name="Hernandez-Lucas I."/>
            <person name="Hong A."/>
            <person name="Huizar L."/>
            <person name="Hyman R.W."/>
            <person name="Jones T."/>
            <person name="Kahn D."/>
            <person name="Kahn M.L."/>
            <person name="Kalman S."/>
            <person name="Keating D.H."/>
            <person name="Kiss E."/>
            <person name="Komp C."/>
            <person name="Lelaure V."/>
            <person name="Masuy D."/>
            <person name="Palm C."/>
            <person name="Peck M.C."/>
            <person name="Pohl T.M."/>
            <person name="Portetelle D."/>
            <person name="Purnelle B."/>
            <person name="Ramsperger U."/>
            <person name="Surzycki R."/>
            <person name="Thebault P."/>
            <person name="Vandenbol M."/>
            <person name="Vorhoelter F.J."/>
            <person name="Weidner S."/>
            <person name="Wells D.H."/>
            <person name="Wong K."/>
            <person name="Yeh K.-C."/>
            <person name="Batut J."/>
        </authorList>
    </citation>
    <scope>NUCLEOTIDE SEQUENCE [LARGE SCALE GENOMIC DNA]</scope>
    <source>
        <strain>1021</strain>
    </source>
</reference>
<evidence type="ECO:0000255" key="1">
    <source>
        <dbReference type="HAMAP-Rule" id="MF_00004"/>
    </source>
</evidence>
<gene>
    <name evidence="1" type="primary">apt</name>
    <name type="ordered locus">R02360</name>
    <name type="ORF">SMc02698</name>
</gene>
<feature type="chain" id="PRO_0000149440" description="Adenine phosphoribosyltransferase">
    <location>
        <begin position="1"/>
        <end position="180"/>
    </location>
</feature>